<comment type="function">
    <text evidence="2">Component of the ubiquinol-cytochrome c reductase complex (complex III or cytochrome b-c1 complex) that is part of the mitochondrial respiratory chain. The b-c1 complex mediates electron transfer from ubiquinol to cytochrome c. Contributes to the generation of a proton gradient across the mitochondrial membrane that is then used for ATP synthesis.</text>
</comment>
<comment type="cofactor">
    <cofactor evidence="2">
        <name>heme b</name>
        <dbReference type="ChEBI" id="CHEBI:60344"/>
    </cofactor>
    <text evidence="2">Binds 2 heme b groups non-covalently.</text>
</comment>
<comment type="subunit">
    <text evidence="2">The cytochrome bc1 complex contains 11 subunits: 3 respiratory subunits (MT-CYB, CYC1 and UQCRFS1), 2 core proteins (UQCRC1 and UQCRC2) and 6 low-molecular weight proteins (UQCRH/QCR6, UQCRB/QCR7, UQCRQ/QCR8, UQCR10/QCR9, UQCR11/QCR10 and a cleavage product of UQCRFS1). This cytochrome bc1 complex then forms a dimer.</text>
</comment>
<comment type="subcellular location">
    <subcellularLocation>
        <location evidence="2">Mitochondrion inner membrane</location>
        <topology evidence="2">Multi-pass membrane protein</topology>
    </subcellularLocation>
</comment>
<comment type="miscellaneous">
    <text evidence="1">Heme 1 (or BL or b562) is low-potential and absorbs at about 562 nm, and heme 2 (or BH or b566) is high-potential and absorbs at about 566 nm.</text>
</comment>
<comment type="similarity">
    <text evidence="3 4">Belongs to the cytochrome b family.</text>
</comment>
<comment type="caution">
    <text evidence="2">The full-length protein contains only eight transmembrane helices, not nine as predicted by bioinformatics tools.</text>
</comment>
<sequence>MAPNPRKSHPLLKMINNSLIDLPTPSNISAWWNFGSLLALCLMTQILTGLLLAMHYTADTTLAFSSVAHTCRDVQYGWLIRNMHANGASFFFICIYLHIGRGFYYGSYLHKETWNTGVLLLLTLMATAFVGYVLPWGQMSFWGATVITNMFSAIPYIGQTIVEWAWGGFSVDNPTLTRFFALHFLLPFMIAGLTLIHLTFLHESGSNNPLGIVSNCDKIPFHPYYSLKDILGLALLLLPLTTMALFSPNLLGDPENFTPANPLVTPPHIKPEWYFLFAYAILRSIPNKLGGVLALAASVLVLFLSPLLHKSKQRTMAFRPLSQLLFWALVANLLILTWIGSQPVEHPFIIIGQLASTTYFIILLILFPITSALENKMLNF</sequence>
<geneLocation type="mitochondrion"/>
<organism>
    <name type="scientific">Oceanodroma microsoma</name>
    <name type="common">Least storm petrel</name>
    <name type="synonym">Hydrobates microsoma</name>
    <dbReference type="NCBI Taxonomy" id="79657"/>
    <lineage>
        <taxon>Eukaryota</taxon>
        <taxon>Metazoa</taxon>
        <taxon>Chordata</taxon>
        <taxon>Craniata</taxon>
        <taxon>Vertebrata</taxon>
        <taxon>Euteleostomi</taxon>
        <taxon>Archelosauria</taxon>
        <taxon>Archosauria</taxon>
        <taxon>Dinosauria</taxon>
        <taxon>Saurischia</taxon>
        <taxon>Theropoda</taxon>
        <taxon>Coelurosauria</taxon>
        <taxon>Aves</taxon>
        <taxon>Neognathae</taxon>
        <taxon>Neoaves</taxon>
        <taxon>Aequornithes</taxon>
        <taxon>Procellariiformes</taxon>
        <taxon>Hydrobatidae</taxon>
        <taxon>Oceanodroma</taxon>
    </lineage>
</organism>
<keyword id="KW-0249">Electron transport</keyword>
<keyword id="KW-0349">Heme</keyword>
<keyword id="KW-0408">Iron</keyword>
<keyword id="KW-0472">Membrane</keyword>
<keyword id="KW-0479">Metal-binding</keyword>
<keyword id="KW-0496">Mitochondrion</keyword>
<keyword id="KW-0999">Mitochondrion inner membrane</keyword>
<keyword id="KW-0679">Respiratory chain</keyword>
<keyword id="KW-0812">Transmembrane</keyword>
<keyword id="KW-1133">Transmembrane helix</keyword>
<keyword id="KW-0813">Transport</keyword>
<keyword id="KW-0830">Ubiquinone</keyword>
<gene>
    <name type="primary">MT-CYB</name>
    <name type="synonym">COB</name>
    <name type="synonym">CYTB</name>
    <name type="synonym">MTCYB</name>
</gene>
<feature type="chain" id="PRO_0000061022" description="Cytochrome b">
    <location>
        <begin position="1"/>
        <end position="380"/>
    </location>
</feature>
<feature type="transmembrane region" description="Helical" evidence="2">
    <location>
        <begin position="34"/>
        <end position="54"/>
    </location>
</feature>
<feature type="transmembrane region" description="Helical" evidence="2">
    <location>
        <begin position="78"/>
        <end position="99"/>
    </location>
</feature>
<feature type="transmembrane region" description="Helical" evidence="2">
    <location>
        <begin position="114"/>
        <end position="134"/>
    </location>
</feature>
<feature type="transmembrane region" description="Helical" evidence="2">
    <location>
        <begin position="179"/>
        <end position="199"/>
    </location>
</feature>
<feature type="transmembrane region" description="Helical" evidence="2">
    <location>
        <begin position="227"/>
        <end position="247"/>
    </location>
</feature>
<feature type="transmembrane region" description="Helical" evidence="2">
    <location>
        <begin position="289"/>
        <end position="309"/>
    </location>
</feature>
<feature type="transmembrane region" description="Helical" evidence="2">
    <location>
        <begin position="321"/>
        <end position="341"/>
    </location>
</feature>
<feature type="transmembrane region" description="Helical" evidence="2">
    <location>
        <begin position="348"/>
        <end position="368"/>
    </location>
</feature>
<feature type="binding site" description="axial binding residue" evidence="2">
    <location>
        <position position="84"/>
    </location>
    <ligand>
        <name>heme b</name>
        <dbReference type="ChEBI" id="CHEBI:60344"/>
        <label>b562</label>
    </ligand>
    <ligandPart>
        <name>Fe</name>
        <dbReference type="ChEBI" id="CHEBI:18248"/>
    </ligandPart>
</feature>
<feature type="binding site" description="axial binding residue" evidence="2">
    <location>
        <position position="98"/>
    </location>
    <ligand>
        <name>heme b</name>
        <dbReference type="ChEBI" id="CHEBI:60344"/>
        <label>b566</label>
    </ligand>
    <ligandPart>
        <name>Fe</name>
        <dbReference type="ChEBI" id="CHEBI:18248"/>
    </ligandPart>
</feature>
<feature type="binding site" description="axial binding residue" evidence="2">
    <location>
        <position position="183"/>
    </location>
    <ligand>
        <name>heme b</name>
        <dbReference type="ChEBI" id="CHEBI:60344"/>
        <label>b562</label>
    </ligand>
    <ligandPart>
        <name>Fe</name>
        <dbReference type="ChEBI" id="CHEBI:18248"/>
    </ligandPart>
</feature>
<feature type="binding site" description="axial binding residue" evidence="2">
    <location>
        <position position="197"/>
    </location>
    <ligand>
        <name>heme b</name>
        <dbReference type="ChEBI" id="CHEBI:60344"/>
        <label>b566</label>
    </ligand>
    <ligandPart>
        <name>Fe</name>
        <dbReference type="ChEBI" id="CHEBI:18248"/>
    </ligandPart>
</feature>
<feature type="binding site" evidence="2">
    <location>
        <position position="202"/>
    </location>
    <ligand>
        <name>a ubiquinone</name>
        <dbReference type="ChEBI" id="CHEBI:16389"/>
    </ligand>
</feature>
<accession>O79205</accession>
<name>CYB_OCEMI</name>
<reference key="1">
    <citation type="journal article" date="1998" name="Mol. Biol. Evol.">
        <title>Body size effects and rates of cytochrome-b evolution in tube-nosed seabirds.</title>
        <authorList>
            <person name="Nunn G.B."/>
            <person name="Stanley S.E."/>
        </authorList>
    </citation>
    <scope>NUCLEOTIDE SEQUENCE [GENOMIC DNA]</scope>
    <source>
        <strain>Isolate Halo-1</strain>
    </source>
</reference>
<evidence type="ECO:0000250" key="1"/>
<evidence type="ECO:0000250" key="2">
    <source>
        <dbReference type="UniProtKB" id="P00157"/>
    </source>
</evidence>
<evidence type="ECO:0000255" key="3">
    <source>
        <dbReference type="PROSITE-ProRule" id="PRU00967"/>
    </source>
</evidence>
<evidence type="ECO:0000255" key="4">
    <source>
        <dbReference type="PROSITE-ProRule" id="PRU00968"/>
    </source>
</evidence>
<proteinExistence type="inferred from homology"/>
<protein>
    <recommendedName>
        <fullName>Cytochrome b</fullName>
    </recommendedName>
    <alternativeName>
        <fullName>Complex III subunit 3</fullName>
    </alternativeName>
    <alternativeName>
        <fullName>Complex III subunit III</fullName>
    </alternativeName>
    <alternativeName>
        <fullName>Cytochrome b-c1 complex subunit 3</fullName>
    </alternativeName>
    <alternativeName>
        <fullName>Ubiquinol-cytochrome-c reductase complex cytochrome b subunit</fullName>
    </alternativeName>
</protein>
<dbReference type="EMBL" id="AF076058">
    <property type="protein sequence ID" value="AAC68615.1"/>
    <property type="molecule type" value="Genomic_DNA"/>
</dbReference>
<dbReference type="SMR" id="O79205"/>
<dbReference type="GO" id="GO:0005743">
    <property type="term" value="C:mitochondrial inner membrane"/>
    <property type="evidence" value="ECO:0007669"/>
    <property type="project" value="UniProtKB-SubCell"/>
</dbReference>
<dbReference type="GO" id="GO:0045275">
    <property type="term" value="C:respiratory chain complex III"/>
    <property type="evidence" value="ECO:0007669"/>
    <property type="project" value="InterPro"/>
</dbReference>
<dbReference type="GO" id="GO:0046872">
    <property type="term" value="F:metal ion binding"/>
    <property type="evidence" value="ECO:0007669"/>
    <property type="project" value="UniProtKB-KW"/>
</dbReference>
<dbReference type="GO" id="GO:0008121">
    <property type="term" value="F:ubiquinol-cytochrome-c reductase activity"/>
    <property type="evidence" value="ECO:0007669"/>
    <property type="project" value="InterPro"/>
</dbReference>
<dbReference type="GO" id="GO:0006122">
    <property type="term" value="P:mitochondrial electron transport, ubiquinol to cytochrome c"/>
    <property type="evidence" value="ECO:0007669"/>
    <property type="project" value="TreeGrafter"/>
</dbReference>
<dbReference type="CDD" id="cd00290">
    <property type="entry name" value="cytochrome_b_C"/>
    <property type="match status" value="1"/>
</dbReference>
<dbReference type="CDD" id="cd00284">
    <property type="entry name" value="Cytochrome_b_N"/>
    <property type="match status" value="1"/>
</dbReference>
<dbReference type="FunFam" id="1.20.810.10:FF:000002">
    <property type="entry name" value="Cytochrome b"/>
    <property type="match status" value="1"/>
</dbReference>
<dbReference type="Gene3D" id="1.20.810.10">
    <property type="entry name" value="Cytochrome Bc1 Complex, Chain C"/>
    <property type="match status" value="1"/>
</dbReference>
<dbReference type="InterPro" id="IPR005798">
    <property type="entry name" value="Cyt_b/b6_C"/>
</dbReference>
<dbReference type="InterPro" id="IPR036150">
    <property type="entry name" value="Cyt_b/b6_C_sf"/>
</dbReference>
<dbReference type="InterPro" id="IPR005797">
    <property type="entry name" value="Cyt_b/b6_N"/>
</dbReference>
<dbReference type="InterPro" id="IPR027387">
    <property type="entry name" value="Cytb/b6-like_sf"/>
</dbReference>
<dbReference type="InterPro" id="IPR030689">
    <property type="entry name" value="Cytochrome_b"/>
</dbReference>
<dbReference type="InterPro" id="IPR048260">
    <property type="entry name" value="Cytochrome_b_C_euk/bac"/>
</dbReference>
<dbReference type="InterPro" id="IPR048259">
    <property type="entry name" value="Cytochrome_b_N_euk/bac"/>
</dbReference>
<dbReference type="InterPro" id="IPR016174">
    <property type="entry name" value="Di-haem_cyt_TM"/>
</dbReference>
<dbReference type="PANTHER" id="PTHR19271">
    <property type="entry name" value="CYTOCHROME B"/>
    <property type="match status" value="1"/>
</dbReference>
<dbReference type="PANTHER" id="PTHR19271:SF16">
    <property type="entry name" value="CYTOCHROME B"/>
    <property type="match status" value="1"/>
</dbReference>
<dbReference type="Pfam" id="PF00032">
    <property type="entry name" value="Cytochrom_B_C"/>
    <property type="match status" value="1"/>
</dbReference>
<dbReference type="Pfam" id="PF00033">
    <property type="entry name" value="Cytochrome_B"/>
    <property type="match status" value="1"/>
</dbReference>
<dbReference type="PIRSF" id="PIRSF038885">
    <property type="entry name" value="COB"/>
    <property type="match status" value="1"/>
</dbReference>
<dbReference type="SUPFAM" id="SSF81648">
    <property type="entry name" value="a domain/subunit of cytochrome bc1 complex (Ubiquinol-cytochrome c reductase)"/>
    <property type="match status" value="1"/>
</dbReference>
<dbReference type="SUPFAM" id="SSF81342">
    <property type="entry name" value="Transmembrane di-heme cytochromes"/>
    <property type="match status" value="1"/>
</dbReference>
<dbReference type="PROSITE" id="PS51003">
    <property type="entry name" value="CYTB_CTER"/>
    <property type="match status" value="1"/>
</dbReference>
<dbReference type="PROSITE" id="PS51002">
    <property type="entry name" value="CYTB_NTER"/>
    <property type="match status" value="1"/>
</dbReference>